<keyword id="KW-0028">Amino-acid biosynthesis</keyword>
<keyword id="KW-0057">Aromatic amino acid biosynthesis</keyword>
<keyword id="KW-0456">Lyase</keyword>
<keyword id="KW-1185">Reference proteome</keyword>
<sequence length="147" mass="16197">MSENFHILLLNGPNLNLLGTREPETYGHLTLNDIVQSLSADAQALNVKLTHFQSNAEHELINKIHAARGNVDYILINPAAFTHTSVALRDALLGVNIPFIEIHLSNVYSREPFRHHSYLSDIATGVICGLGAEGYRFALQAAVNRLS</sequence>
<proteinExistence type="inferred from homology"/>
<comment type="function">
    <text evidence="1">Catalyzes a trans-dehydration via an enolate intermediate.</text>
</comment>
<comment type="catalytic activity">
    <reaction evidence="1">
        <text>3-dehydroquinate = 3-dehydroshikimate + H2O</text>
        <dbReference type="Rhea" id="RHEA:21096"/>
        <dbReference type="ChEBI" id="CHEBI:15377"/>
        <dbReference type="ChEBI" id="CHEBI:16630"/>
        <dbReference type="ChEBI" id="CHEBI:32364"/>
        <dbReference type="EC" id="4.2.1.10"/>
    </reaction>
</comment>
<comment type="pathway">
    <text evidence="1">Metabolic intermediate biosynthesis; chorismate biosynthesis; chorismate from D-erythrose 4-phosphate and phosphoenolpyruvate: step 3/7.</text>
</comment>
<comment type="subunit">
    <text evidence="1">Homododecamer.</text>
</comment>
<comment type="similarity">
    <text evidence="1">Belongs to the type-II 3-dehydroquinase family.</text>
</comment>
<name>AROQ_PROMH</name>
<reference key="1">
    <citation type="journal article" date="2008" name="J. Bacteriol.">
        <title>Complete genome sequence of uropathogenic Proteus mirabilis, a master of both adherence and motility.</title>
        <authorList>
            <person name="Pearson M.M."/>
            <person name="Sebaihia M."/>
            <person name="Churcher C."/>
            <person name="Quail M.A."/>
            <person name="Seshasayee A.S."/>
            <person name="Luscombe N.M."/>
            <person name="Abdellah Z."/>
            <person name="Arrosmith C."/>
            <person name="Atkin B."/>
            <person name="Chillingworth T."/>
            <person name="Hauser H."/>
            <person name="Jagels K."/>
            <person name="Moule S."/>
            <person name="Mungall K."/>
            <person name="Norbertczak H."/>
            <person name="Rabbinowitsch E."/>
            <person name="Walker D."/>
            <person name="Whithead S."/>
            <person name="Thomson N.R."/>
            <person name="Rather P.N."/>
            <person name="Parkhill J."/>
            <person name="Mobley H.L.T."/>
        </authorList>
    </citation>
    <scope>NUCLEOTIDE SEQUENCE [LARGE SCALE GENOMIC DNA]</scope>
    <source>
        <strain>HI4320</strain>
    </source>
</reference>
<dbReference type="EC" id="4.2.1.10" evidence="1"/>
<dbReference type="EMBL" id="AM942759">
    <property type="protein sequence ID" value="CAR47090.1"/>
    <property type="molecule type" value="Genomic_DNA"/>
</dbReference>
<dbReference type="RefSeq" id="WP_004245332.1">
    <property type="nucleotide sequence ID" value="NC_010554.1"/>
</dbReference>
<dbReference type="SMR" id="B4EX28"/>
<dbReference type="EnsemblBacteria" id="CAR47090">
    <property type="protein sequence ID" value="CAR47090"/>
    <property type="gene ID" value="PMI3629"/>
</dbReference>
<dbReference type="GeneID" id="6803331"/>
<dbReference type="KEGG" id="pmr:PMI3629"/>
<dbReference type="eggNOG" id="COG0757">
    <property type="taxonomic scope" value="Bacteria"/>
</dbReference>
<dbReference type="HOGENOM" id="CLU_090968_1_0_6"/>
<dbReference type="UniPathway" id="UPA00053">
    <property type="reaction ID" value="UER00086"/>
</dbReference>
<dbReference type="Proteomes" id="UP000008319">
    <property type="component" value="Chromosome"/>
</dbReference>
<dbReference type="GO" id="GO:0003855">
    <property type="term" value="F:3-dehydroquinate dehydratase activity"/>
    <property type="evidence" value="ECO:0007669"/>
    <property type="project" value="UniProtKB-UniRule"/>
</dbReference>
<dbReference type="GO" id="GO:0008652">
    <property type="term" value="P:amino acid biosynthetic process"/>
    <property type="evidence" value="ECO:0007669"/>
    <property type="project" value="UniProtKB-KW"/>
</dbReference>
<dbReference type="GO" id="GO:0009073">
    <property type="term" value="P:aromatic amino acid family biosynthetic process"/>
    <property type="evidence" value="ECO:0007669"/>
    <property type="project" value="UniProtKB-KW"/>
</dbReference>
<dbReference type="GO" id="GO:0009423">
    <property type="term" value="P:chorismate biosynthetic process"/>
    <property type="evidence" value="ECO:0007669"/>
    <property type="project" value="UniProtKB-UniRule"/>
</dbReference>
<dbReference type="GO" id="GO:0019631">
    <property type="term" value="P:quinate catabolic process"/>
    <property type="evidence" value="ECO:0007669"/>
    <property type="project" value="TreeGrafter"/>
</dbReference>
<dbReference type="CDD" id="cd00466">
    <property type="entry name" value="DHQase_II"/>
    <property type="match status" value="1"/>
</dbReference>
<dbReference type="Gene3D" id="3.40.50.9100">
    <property type="entry name" value="Dehydroquinase, class II"/>
    <property type="match status" value="1"/>
</dbReference>
<dbReference type="HAMAP" id="MF_00169">
    <property type="entry name" value="AroQ"/>
    <property type="match status" value="1"/>
</dbReference>
<dbReference type="InterPro" id="IPR001874">
    <property type="entry name" value="DHquinase_II"/>
</dbReference>
<dbReference type="InterPro" id="IPR018509">
    <property type="entry name" value="DHquinase_II_CS"/>
</dbReference>
<dbReference type="InterPro" id="IPR036441">
    <property type="entry name" value="DHquinase_II_sf"/>
</dbReference>
<dbReference type="NCBIfam" id="TIGR01088">
    <property type="entry name" value="aroQ"/>
    <property type="match status" value="1"/>
</dbReference>
<dbReference type="NCBIfam" id="NF003804">
    <property type="entry name" value="PRK05395.1-1"/>
    <property type="match status" value="1"/>
</dbReference>
<dbReference type="NCBIfam" id="NF003805">
    <property type="entry name" value="PRK05395.1-2"/>
    <property type="match status" value="1"/>
</dbReference>
<dbReference type="NCBIfam" id="NF003806">
    <property type="entry name" value="PRK05395.1-3"/>
    <property type="match status" value="1"/>
</dbReference>
<dbReference type="NCBIfam" id="NF003807">
    <property type="entry name" value="PRK05395.1-4"/>
    <property type="match status" value="1"/>
</dbReference>
<dbReference type="PANTHER" id="PTHR21272">
    <property type="entry name" value="CATABOLIC 3-DEHYDROQUINASE"/>
    <property type="match status" value="1"/>
</dbReference>
<dbReference type="PANTHER" id="PTHR21272:SF3">
    <property type="entry name" value="CATABOLIC 3-DEHYDROQUINASE"/>
    <property type="match status" value="1"/>
</dbReference>
<dbReference type="Pfam" id="PF01220">
    <property type="entry name" value="DHquinase_II"/>
    <property type="match status" value="1"/>
</dbReference>
<dbReference type="PIRSF" id="PIRSF001399">
    <property type="entry name" value="DHquinase_II"/>
    <property type="match status" value="1"/>
</dbReference>
<dbReference type="SUPFAM" id="SSF52304">
    <property type="entry name" value="Type II 3-dehydroquinate dehydratase"/>
    <property type="match status" value="1"/>
</dbReference>
<dbReference type="PROSITE" id="PS01029">
    <property type="entry name" value="DEHYDROQUINASE_II"/>
    <property type="match status" value="1"/>
</dbReference>
<gene>
    <name evidence="1" type="primary">aroQ</name>
    <name type="ordered locus">PMI3629</name>
</gene>
<evidence type="ECO:0000255" key="1">
    <source>
        <dbReference type="HAMAP-Rule" id="MF_00169"/>
    </source>
</evidence>
<protein>
    <recommendedName>
        <fullName evidence="1">3-dehydroquinate dehydratase</fullName>
        <shortName evidence="1">3-dehydroquinase</shortName>
        <ecNumber evidence="1">4.2.1.10</ecNumber>
    </recommendedName>
    <alternativeName>
        <fullName evidence="1">Type II DHQase</fullName>
    </alternativeName>
</protein>
<organism>
    <name type="scientific">Proteus mirabilis (strain HI4320)</name>
    <dbReference type="NCBI Taxonomy" id="529507"/>
    <lineage>
        <taxon>Bacteria</taxon>
        <taxon>Pseudomonadati</taxon>
        <taxon>Pseudomonadota</taxon>
        <taxon>Gammaproteobacteria</taxon>
        <taxon>Enterobacterales</taxon>
        <taxon>Morganellaceae</taxon>
        <taxon>Proteus</taxon>
    </lineage>
</organism>
<accession>B4EX28</accession>
<feature type="chain" id="PRO_1000097615" description="3-dehydroquinate dehydratase">
    <location>
        <begin position="1"/>
        <end position="147"/>
    </location>
</feature>
<feature type="active site" description="Proton acceptor" evidence="1">
    <location>
        <position position="26"/>
    </location>
</feature>
<feature type="active site" description="Proton donor" evidence="1">
    <location>
        <position position="103"/>
    </location>
</feature>
<feature type="binding site" evidence="1">
    <location>
        <position position="77"/>
    </location>
    <ligand>
        <name>substrate</name>
    </ligand>
</feature>
<feature type="binding site" evidence="1">
    <location>
        <position position="83"/>
    </location>
    <ligand>
        <name>substrate</name>
    </ligand>
</feature>
<feature type="binding site" evidence="1">
    <location>
        <position position="90"/>
    </location>
    <ligand>
        <name>substrate</name>
    </ligand>
</feature>
<feature type="binding site" evidence="1">
    <location>
        <begin position="104"/>
        <end position="105"/>
    </location>
    <ligand>
        <name>substrate</name>
    </ligand>
</feature>
<feature type="binding site" evidence="1">
    <location>
        <position position="114"/>
    </location>
    <ligand>
        <name>substrate</name>
    </ligand>
</feature>
<feature type="site" description="Transition state stabilizer" evidence="1">
    <location>
        <position position="21"/>
    </location>
</feature>